<feature type="chain" id="PRO_0000287862" description="NADH-quinone oxidoreductase subunit D">
    <location>
        <begin position="1"/>
        <end position="391"/>
    </location>
</feature>
<name>NUOD_RICBR</name>
<gene>
    <name evidence="1" type="primary">nuoD</name>
    <name type="ordered locus">RBE_0394</name>
</gene>
<sequence>MTNNTKSITLNLGPQHPATHGVLRLILEMDGEVVNNADPHIGLLHRGTEKLIEHKTYLQAIPYFDRLDYVSPMCQEHAFALAAESLLECEIPRRAQFIRVLFSELTRILNHTLNIGSQALDVGATTPLLWLFEEREKIMEFYERVSGSRMHSNYFRPGGVAEDLPDGLLEDIDKFIQQFPPKLQDIENLLNENRLWKQRLVDIGVVSQKEAMDWGFSGPMLRGSGIAWDLRKSNPYDVYAEMDFEVPIGKNGDCYDRYLVRMLEMYESVKIIKQCIEKMPQGPVKTDDPKLTPPTRAKMKESMEAMIHHFKLYTEGYDVPAGEIYKAVEAPKGEFGVYLYSTGGNRPYRCRIKAPGFAHLQGLDFMSKGHLMADVITIIATLDIVFGEIDR</sequence>
<protein>
    <recommendedName>
        <fullName evidence="1">NADH-quinone oxidoreductase subunit D</fullName>
        <ecNumber evidence="1">7.1.1.-</ecNumber>
    </recommendedName>
    <alternativeName>
        <fullName evidence="1">NADH dehydrogenase I subunit D</fullName>
    </alternativeName>
    <alternativeName>
        <fullName evidence="1">NDH-1 subunit D</fullName>
    </alternativeName>
</protein>
<organism>
    <name type="scientific">Rickettsia bellii (strain RML369-C)</name>
    <dbReference type="NCBI Taxonomy" id="336407"/>
    <lineage>
        <taxon>Bacteria</taxon>
        <taxon>Pseudomonadati</taxon>
        <taxon>Pseudomonadota</taxon>
        <taxon>Alphaproteobacteria</taxon>
        <taxon>Rickettsiales</taxon>
        <taxon>Rickettsiaceae</taxon>
        <taxon>Rickettsieae</taxon>
        <taxon>Rickettsia</taxon>
        <taxon>belli group</taxon>
    </lineage>
</organism>
<dbReference type="EC" id="7.1.1.-" evidence="1"/>
<dbReference type="EMBL" id="CP000087">
    <property type="protein sequence ID" value="ABE04475.1"/>
    <property type="status" value="ALT_INIT"/>
    <property type="molecule type" value="Genomic_DNA"/>
</dbReference>
<dbReference type="RefSeq" id="WP_012152063.1">
    <property type="nucleotide sequence ID" value="NC_007940.1"/>
</dbReference>
<dbReference type="SMR" id="Q1RJI9"/>
<dbReference type="KEGG" id="rbe:RBE_0394"/>
<dbReference type="eggNOG" id="COG0649">
    <property type="taxonomic scope" value="Bacteria"/>
</dbReference>
<dbReference type="HOGENOM" id="CLU_015134_1_1_5"/>
<dbReference type="OrthoDB" id="9801496at2"/>
<dbReference type="Proteomes" id="UP000001951">
    <property type="component" value="Chromosome"/>
</dbReference>
<dbReference type="GO" id="GO:0005886">
    <property type="term" value="C:plasma membrane"/>
    <property type="evidence" value="ECO:0007669"/>
    <property type="project" value="UniProtKB-SubCell"/>
</dbReference>
<dbReference type="GO" id="GO:0051287">
    <property type="term" value="F:NAD binding"/>
    <property type="evidence" value="ECO:0007669"/>
    <property type="project" value="InterPro"/>
</dbReference>
<dbReference type="GO" id="GO:0050136">
    <property type="term" value="F:NADH:ubiquinone reductase (non-electrogenic) activity"/>
    <property type="evidence" value="ECO:0007669"/>
    <property type="project" value="UniProtKB-UniRule"/>
</dbReference>
<dbReference type="GO" id="GO:0048038">
    <property type="term" value="F:quinone binding"/>
    <property type="evidence" value="ECO:0007669"/>
    <property type="project" value="UniProtKB-KW"/>
</dbReference>
<dbReference type="FunFam" id="1.10.645.10:FF:000005">
    <property type="entry name" value="NADH-quinone oxidoreductase subunit D"/>
    <property type="match status" value="1"/>
</dbReference>
<dbReference type="Gene3D" id="1.10.645.10">
    <property type="entry name" value="Cytochrome-c3 Hydrogenase, chain B"/>
    <property type="match status" value="1"/>
</dbReference>
<dbReference type="HAMAP" id="MF_01358">
    <property type="entry name" value="NDH1_NuoD"/>
    <property type="match status" value="1"/>
</dbReference>
<dbReference type="InterPro" id="IPR001135">
    <property type="entry name" value="NADH_Q_OxRdtase_suD"/>
</dbReference>
<dbReference type="InterPro" id="IPR014029">
    <property type="entry name" value="NADH_UbQ_OxRdtase_49kDa_CS"/>
</dbReference>
<dbReference type="InterPro" id="IPR022885">
    <property type="entry name" value="NDH1_su_D/H"/>
</dbReference>
<dbReference type="InterPro" id="IPR029014">
    <property type="entry name" value="NiFe-Hase_large"/>
</dbReference>
<dbReference type="NCBIfam" id="TIGR01962">
    <property type="entry name" value="NuoD"/>
    <property type="match status" value="1"/>
</dbReference>
<dbReference type="NCBIfam" id="NF004739">
    <property type="entry name" value="PRK06075.1"/>
    <property type="match status" value="1"/>
</dbReference>
<dbReference type="PANTHER" id="PTHR11993:SF10">
    <property type="entry name" value="NADH DEHYDROGENASE [UBIQUINONE] IRON-SULFUR PROTEIN 2, MITOCHONDRIAL"/>
    <property type="match status" value="1"/>
</dbReference>
<dbReference type="PANTHER" id="PTHR11993">
    <property type="entry name" value="NADH-UBIQUINONE OXIDOREDUCTASE 49 KDA SUBUNIT"/>
    <property type="match status" value="1"/>
</dbReference>
<dbReference type="Pfam" id="PF00346">
    <property type="entry name" value="Complex1_49kDa"/>
    <property type="match status" value="1"/>
</dbReference>
<dbReference type="SUPFAM" id="SSF56762">
    <property type="entry name" value="HydB/Nqo4-like"/>
    <property type="match status" value="1"/>
</dbReference>
<dbReference type="PROSITE" id="PS00535">
    <property type="entry name" value="COMPLEX1_49K"/>
    <property type="match status" value="1"/>
</dbReference>
<reference key="1">
    <citation type="journal article" date="2006" name="PLoS Genet.">
        <title>Genome sequence of Rickettsia bellii illuminates the role of amoebae in gene exchanges between intracellular pathogens.</title>
        <authorList>
            <person name="Ogata H."/>
            <person name="La Scola B."/>
            <person name="Audic S."/>
            <person name="Renesto P."/>
            <person name="Blanc G."/>
            <person name="Robert C."/>
            <person name="Fournier P.-E."/>
            <person name="Claverie J.-M."/>
            <person name="Raoult D."/>
        </authorList>
    </citation>
    <scope>NUCLEOTIDE SEQUENCE [LARGE SCALE GENOMIC DNA]</scope>
    <source>
        <strain>RML369-C</strain>
    </source>
</reference>
<accession>Q1RJI9</accession>
<comment type="function">
    <text evidence="1">NDH-1 shuttles electrons from NADH, via FMN and iron-sulfur (Fe-S) centers, to quinones in the respiratory chain. The immediate electron acceptor for the enzyme in this species is believed to be ubiquinone. Couples the redox reaction to proton translocation (for every two electrons transferred, four hydrogen ions are translocated across the cytoplasmic membrane), and thus conserves the redox energy in a proton gradient.</text>
</comment>
<comment type="catalytic activity">
    <reaction evidence="1">
        <text>a quinone + NADH + 5 H(+)(in) = a quinol + NAD(+) + 4 H(+)(out)</text>
        <dbReference type="Rhea" id="RHEA:57888"/>
        <dbReference type="ChEBI" id="CHEBI:15378"/>
        <dbReference type="ChEBI" id="CHEBI:24646"/>
        <dbReference type="ChEBI" id="CHEBI:57540"/>
        <dbReference type="ChEBI" id="CHEBI:57945"/>
        <dbReference type="ChEBI" id="CHEBI:132124"/>
    </reaction>
</comment>
<comment type="subunit">
    <text evidence="1">NDH-1 is composed of 14 different subunits. Subunits NuoB, C, D, E, F, and G constitute the peripheral sector of the complex.</text>
</comment>
<comment type="subcellular location">
    <subcellularLocation>
        <location evidence="1">Cell inner membrane</location>
        <topology evidence="1">Peripheral membrane protein</topology>
        <orientation evidence="1">Cytoplasmic side</orientation>
    </subcellularLocation>
</comment>
<comment type="similarity">
    <text evidence="1">Belongs to the complex I 49 kDa subunit family.</text>
</comment>
<comment type="sequence caution" evidence="2">
    <conflict type="erroneous initiation">
        <sequence resource="EMBL-CDS" id="ABE04475"/>
    </conflict>
</comment>
<keyword id="KW-0997">Cell inner membrane</keyword>
<keyword id="KW-1003">Cell membrane</keyword>
<keyword id="KW-0472">Membrane</keyword>
<keyword id="KW-0520">NAD</keyword>
<keyword id="KW-0874">Quinone</keyword>
<keyword id="KW-1278">Translocase</keyword>
<keyword id="KW-0813">Transport</keyword>
<keyword id="KW-0830">Ubiquinone</keyword>
<evidence type="ECO:0000255" key="1">
    <source>
        <dbReference type="HAMAP-Rule" id="MF_01358"/>
    </source>
</evidence>
<evidence type="ECO:0000305" key="2"/>
<proteinExistence type="inferred from homology"/>